<proteinExistence type="evidence at protein level"/>
<protein>
    <recommendedName>
        <fullName>Sodium-dependent neutral amino acid transporter B(0)AT1</fullName>
    </recommendedName>
    <alternativeName>
        <fullName>Solute carrier family 6 member 19</fullName>
    </alternativeName>
    <alternativeName>
        <fullName>System B(0) neutral amino acid transporter AT1</fullName>
    </alternativeName>
</protein>
<organism>
    <name type="scientific">Rattus norvegicus</name>
    <name type="common">Rat</name>
    <dbReference type="NCBI Taxonomy" id="10116"/>
    <lineage>
        <taxon>Eukaryota</taxon>
        <taxon>Metazoa</taxon>
        <taxon>Chordata</taxon>
        <taxon>Craniata</taxon>
        <taxon>Vertebrata</taxon>
        <taxon>Euteleostomi</taxon>
        <taxon>Mammalia</taxon>
        <taxon>Eutheria</taxon>
        <taxon>Euarchontoglires</taxon>
        <taxon>Glires</taxon>
        <taxon>Rodentia</taxon>
        <taxon>Myomorpha</taxon>
        <taxon>Muroidea</taxon>
        <taxon>Muridae</taxon>
        <taxon>Murinae</taxon>
        <taxon>Rattus</taxon>
    </lineage>
</organism>
<dbReference type="EMBL" id="AJ890206">
    <property type="protein sequence ID" value="CAI64591.1"/>
    <property type="molecule type" value="mRNA"/>
</dbReference>
<dbReference type="EMBL" id="EF474455">
    <property type="protein sequence ID" value="ABP63542.1"/>
    <property type="molecule type" value="mRNA"/>
</dbReference>
<dbReference type="RefSeq" id="NP_001034811.2">
    <property type="nucleotide sequence ID" value="NM_001039722.3"/>
</dbReference>
<dbReference type="SMR" id="Q2A865"/>
<dbReference type="FunCoup" id="Q2A865">
    <property type="interactions" value="93"/>
</dbReference>
<dbReference type="STRING" id="10116.ENSRNOP00000028917"/>
<dbReference type="DrugCentral" id="Q2A865"/>
<dbReference type="GuidetoPHARMACOLOGY" id="939"/>
<dbReference type="GlyCosmos" id="Q2A865">
    <property type="glycosylation" value="5 sites, No reported glycans"/>
</dbReference>
<dbReference type="GlyGen" id="Q2A865">
    <property type="glycosylation" value="5 sites"/>
</dbReference>
<dbReference type="iPTMnet" id="Q2A865"/>
<dbReference type="PhosphoSitePlus" id="Q2A865"/>
<dbReference type="PaxDb" id="10116-ENSRNOP00000028917"/>
<dbReference type="Ensembl" id="ENSRNOT00000036714.4">
    <property type="protein sequence ID" value="ENSRNOP00000028917.2"/>
    <property type="gene ID" value="ENSRNOG00000026501.6"/>
</dbReference>
<dbReference type="GeneID" id="664630"/>
<dbReference type="KEGG" id="rno:664630"/>
<dbReference type="UCSC" id="RGD:1594328">
    <property type="organism name" value="rat"/>
</dbReference>
<dbReference type="AGR" id="RGD:1594328"/>
<dbReference type="CTD" id="340024"/>
<dbReference type="RGD" id="1594328">
    <property type="gene designation" value="Slc6a19"/>
</dbReference>
<dbReference type="eggNOG" id="KOG3659">
    <property type="taxonomic scope" value="Eukaryota"/>
</dbReference>
<dbReference type="GeneTree" id="ENSGT00940000154896"/>
<dbReference type="HOGENOM" id="CLU_006855_7_2_1"/>
<dbReference type="InParanoid" id="Q2A865"/>
<dbReference type="OMA" id="WPKELIT"/>
<dbReference type="OrthoDB" id="6581954at2759"/>
<dbReference type="PhylomeDB" id="Q2A865"/>
<dbReference type="TreeFam" id="TF343812"/>
<dbReference type="Reactome" id="R-RNO-352230">
    <property type="pathway name" value="Amino acid transport across the plasma membrane"/>
</dbReference>
<dbReference type="Reactome" id="R-RNO-442660">
    <property type="pathway name" value="Na+/Cl- dependent neurotransmitter transporters"/>
</dbReference>
<dbReference type="PRO" id="PR:Q2A865"/>
<dbReference type="Proteomes" id="UP000002494">
    <property type="component" value="Chromosome 1"/>
</dbReference>
<dbReference type="Bgee" id="ENSRNOG00000026501">
    <property type="expression patterns" value="Expressed in jejunum and 8 other cell types or tissues"/>
</dbReference>
<dbReference type="GO" id="GO:0016324">
    <property type="term" value="C:apical plasma membrane"/>
    <property type="evidence" value="ECO:0000250"/>
    <property type="project" value="UniProtKB"/>
</dbReference>
<dbReference type="GO" id="GO:0031526">
    <property type="term" value="C:brush border membrane"/>
    <property type="evidence" value="ECO:0000266"/>
    <property type="project" value="RGD"/>
</dbReference>
<dbReference type="GO" id="GO:0005886">
    <property type="term" value="C:plasma membrane"/>
    <property type="evidence" value="ECO:0000318"/>
    <property type="project" value="GO_Central"/>
</dbReference>
<dbReference type="GO" id="GO:0015175">
    <property type="term" value="F:neutral L-amino acid transmembrane transporter activity"/>
    <property type="evidence" value="ECO:0000250"/>
    <property type="project" value="UniProtKB"/>
</dbReference>
<dbReference type="GO" id="GO:0015293">
    <property type="term" value="F:symporter activity"/>
    <property type="evidence" value="ECO:0007669"/>
    <property type="project" value="UniProtKB-KW"/>
</dbReference>
<dbReference type="GO" id="GO:0015804">
    <property type="term" value="P:neutral amino acid transport"/>
    <property type="evidence" value="ECO:0000266"/>
    <property type="project" value="RGD"/>
</dbReference>
<dbReference type="GO" id="GO:0007584">
    <property type="term" value="P:response to nutrient"/>
    <property type="evidence" value="ECO:0000270"/>
    <property type="project" value="RGD"/>
</dbReference>
<dbReference type="GO" id="GO:0035725">
    <property type="term" value="P:sodium ion transmembrane transport"/>
    <property type="evidence" value="ECO:0000318"/>
    <property type="project" value="GO_Central"/>
</dbReference>
<dbReference type="InterPro" id="IPR000175">
    <property type="entry name" value="Na/ntran_symport"/>
</dbReference>
<dbReference type="InterPro" id="IPR002438">
    <property type="entry name" value="Neutral_aa_SLC6"/>
</dbReference>
<dbReference type="InterPro" id="IPR037272">
    <property type="entry name" value="SNS_sf"/>
</dbReference>
<dbReference type="NCBIfam" id="NF037979">
    <property type="entry name" value="Na_transp"/>
    <property type="match status" value="1"/>
</dbReference>
<dbReference type="PANTHER" id="PTHR11616:SF125">
    <property type="entry name" value="SODIUM-DEPENDENT NEUTRAL AMINO ACID TRANSPORTER B(0)AT1"/>
    <property type="match status" value="1"/>
</dbReference>
<dbReference type="PANTHER" id="PTHR11616">
    <property type="entry name" value="SODIUM/CHLORIDE DEPENDENT TRANSPORTER"/>
    <property type="match status" value="1"/>
</dbReference>
<dbReference type="Pfam" id="PF00209">
    <property type="entry name" value="SNF"/>
    <property type="match status" value="1"/>
</dbReference>
<dbReference type="PRINTS" id="PR00176">
    <property type="entry name" value="NANEUSMPORT"/>
</dbReference>
<dbReference type="PRINTS" id="PR01206">
    <property type="entry name" value="ORPHTRNSPORT"/>
</dbReference>
<dbReference type="SUPFAM" id="SSF161070">
    <property type="entry name" value="SNF-like"/>
    <property type="match status" value="1"/>
</dbReference>
<dbReference type="PROSITE" id="PS00610">
    <property type="entry name" value="NA_NEUROTRAN_SYMP_1"/>
    <property type="match status" value="1"/>
</dbReference>
<dbReference type="PROSITE" id="PS50267">
    <property type="entry name" value="NA_NEUROTRAN_SYMP_3"/>
    <property type="match status" value="1"/>
</dbReference>
<accession>Q2A865</accession>
<accession>A4ZVM8</accession>
<reference evidence="6" key="1">
    <citation type="submission" date="2005-03" db="EMBL/GenBank/DDBJ databases">
        <title>Cloning and characterization of the rat B0 amino acid transporter 1.</title>
        <authorList>
            <person name="Volk C."/>
            <person name="Koepsell H."/>
            <person name="Arndt P."/>
        </authorList>
    </citation>
    <scope>NUCLEOTIDE SEQUENCE [MRNA]</scope>
    <source>
        <tissue evidence="6">Kidney</tissue>
    </source>
</reference>
<reference key="2">
    <citation type="journal article" date="2007" name="Mol. Cell. Biochem.">
        <title>Organ specific underexpression renal of Na+-dependent B0AT1 in the SHR correlates positively with overexpression of NHE3 and salt intake.</title>
        <authorList>
            <person name="Pinho M.J."/>
            <person name="Serrao M.P."/>
            <person name="Jose P.A."/>
            <person name="Soares-da-Silva P."/>
        </authorList>
    </citation>
    <scope>NUCLEOTIDE SEQUENCE [MRNA]</scope>
    <source>
        <strain>Wistar Kyoto</strain>
    </source>
</reference>
<reference evidence="5" key="3">
    <citation type="journal article" date="2007" name="Am. J. Physiol.">
        <title>High-salt intake and the renal expression of amino acid transporters in spontaneously hypertensive rats.</title>
        <authorList>
            <person name="Pinho M.J."/>
            <person name="Serrao M.P."/>
            <person name="Soares-da-Silva P."/>
        </authorList>
    </citation>
    <scope>INDUCTION BY HIGH SALT INTAKE</scope>
</reference>
<reference key="4">
    <citation type="journal article" date="2012" name="Nat. Commun.">
        <title>Quantitative maps of protein phosphorylation sites across 14 different rat organs and tissues.</title>
        <authorList>
            <person name="Lundby A."/>
            <person name="Secher A."/>
            <person name="Lage K."/>
            <person name="Nordsborg N.B."/>
            <person name="Dmytriyev A."/>
            <person name="Lundby C."/>
            <person name="Olsen J.V."/>
        </authorList>
    </citation>
    <scope>PHOSPHORYLATION [LARGE SCALE ANALYSIS] AT SER-17</scope>
    <scope>IDENTIFICATION BY MASS SPECTROMETRY [LARGE SCALE ANALYSIS]</scope>
</reference>
<sequence>MVRLVLPNPGLEDRIPSLDELEVIEKEEASSRPKWDNKAQYMLTCVGFCVGLGNVWRFPYLCQSHGGGAFMIPFLILLVLEGIPLLHLEFAIGQRLRKGSVGVWSSIHPALKGVGIASMFVSFMVGLYYNTIIAWVMWYFFNSFQEPLPWSECPLNQNQTGYVEECAKSSSVDYFWYRETLNISTSISDSGSIQWWILLCLTCAWSVLYVCTIRGIETTGKAVYITSTLPYVVLTIFLIRGLTLKGATNGIVFLFTPNITELSNPNTWLDAGAQVFYSFSLAFGGLISFSSYNSVHNNCEMDSVIVSIINGFTSVYAATVVYSIIGFRATERFDDCVNTNILTLINGFDLPEGNVTAENFEAYQHWCNATNPEAYAQLTFQTCDINTFLSEGVEGTGLAFIVFTEAITKMPVSPLWSVLFFIMLFCLGLSSMFGNMEGVVVPLQDLNITPKKWPKELLTGLICLGTYLIAFIFTLNSGQYWLSLLDSYAGSIPLLIIAFCEMFAVVYVYGVDRFNKDIEFMIGHKPNIFWQVTWRVVSPLIMLVIFLFFFVIEVNKQLMYSVWDPDYEEFPKSQKVPYPDWVYAVVVIVAGVPCLTIPCFAIYKLIRNYCQKSGDQHGLVNALSTASVNGDLKN</sequence>
<keyword id="KW-0029">Amino-acid transport</keyword>
<keyword id="KW-0325">Glycoprotein</keyword>
<keyword id="KW-0472">Membrane</keyword>
<keyword id="KW-0597">Phosphoprotein</keyword>
<keyword id="KW-1185">Reference proteome</keyword>
<keyword id="KW-0769">Symport</keyword>
<keyword id="KW-0812">Transmembrane</keyword>
<keyword id="KW-1133">Transmembrane helix</keyword>
<keyword id="KW-0813">Transport</keyword>
<comment type="function">
    <text evidence="2">Transporter that mediates resorption of neutral amino acids across the apical membrane of renal and intestinal epithelial cells. This uptake is sodium-dependent and chloride-independent. Requires CLTRN in kidney or ACE2 in intestine for cell surface expression and amino acid transporter activity.</text>
</comment>
<comment type="catalytic activity">
    <reaction evidence="1">
        <text>L-alanine(in) + Na(+)(in) = L-alanine(out) + Na(+)(out)</text>
        <dbReference type="Rhea" id="RHEA:29283"/>
        <dbReference type="ChEBI" id="CHEBI:29101"/>
        <dbReference type="ChEBI" id="CHEBI:57972"/>
    </reaction>
</comment>
<comment type="catalytic activity">
    <reaction evidence="1">
        <text>L-cysteine(in) + Na(+)(in) = L-cysteine(out) + Na(+)(out)</text>
        <dbReference type="Rhea" id="RHEA:68232"/>
        <dbReference type="ChEBI" id="CHEBI:29101"/>
        <dbReference type="ChEBI" id="CHEBI:35235"/>
    </reaction>
</comment>
<comment type="catalytic activity">
    <reaction evidence="1">
        <text>L-glutamine(in) + Na(+)(in) = L-glutamine(out) + Na(+)(out)</text>
        <dbReference type="Rhea" id="RHEA:68236"/>
        <dbReference type="ChEBI" id="CHEBI:29101"/>
        <dbReference type="ChEBI" id="CHEBI:58359"/>
    </reaction>
</comment>
<comment type="catalytic activity">
    <reaction evidence="1">
        <text>glycine(in) + Na(+)(in) = glycine(out) + Na(+)(out)</text>
        <dbReference type="Rhea" id="RHEA:68228"/>
        <dbReference type="ChEBI" id="CHEBI:29101"/>
        <dbReference type="ChEBI" id="CHEBI:57305"/>
    </reaction>
</comment>
<comment type="catalytic activity">
    <reaction evidence="1">
        <text>L-isoleucine(in) + Na(+)(in) = L-isoleucine(out) + Na(+)(out)</text>
        <dbReference type="Rhea" id="RHEA:29275"/>
        <dbReference type="ChEBI" id="CHEBI:29101"/>
        <dbReference type="ChEBI" id="CHEBI:58045"/>
    </reaction>
</comment>
<comment type="catalytic activity">
    <reaction evidence="1">
        <text>L-leucine(in) + Na(+)(in) = L-leucine(out) + Na(+)(out)</text>
        <dbReference type="Rhea" id="RHEA:29263"/>
        <dbReference type="ChEBI" id="CHEBI:29101"/>
        <dbReference type="ChEBI" id="CHEBI:57427"/>
    </reaction>
</comment>
<comment type="catalytic activity">
    <reaction evidence="1">
        <text>L-methionine(in) + Na(+)(in) = L-methionine(out) + Na(+)(out)</text>
        <dbReference type="Rhea" id="RHEA:68240"/>
        <dbReference type="ChEBI" id="CHEBI:29101"/>
        <dbReference type="ChEBI" id="CHEBI:57844"/>
    </reaction>
</comment>
<comment type="catalytic activity">
    <reaction evidence="1">
        <text>L-phenylalanine(in) + Na(+)(in) = L-phenylalanine(out) + Na(+)(out)</text>
        <dbReference type="Rhea" id="RHEA:68244"/>
        <dbReference type="ChEBI" id="CHEBI:29101"/>
        <dbReference type="ChEBI" id="CHEBI:58095"/>
    </reaction>
</comment>
<comment type="catalytic activity">
    <reaction evidence="1">
        <text>L-serine(in) + Na(+)(in) = L-serine(out) + Na(+)(out)</text>
        <dbReference type="Rhea" id="RHEA:29575"/>
        <dbReference type="ChEBI" id="CHEBI:29101"/>
        <dbReference type="ChEBI" id="CHEBI:33384"/>
    </reaction>
</comment>
<comment type="catalytic activity">
    <reaction evidence="1">
        <text>L-tryptophan(in) + Na(+)(in) = L-tryptophan(out) + Na(+)(out)</text>
        <dbReference type="Rhea" id="RHEA:68252"/>
        <dbReference type="ChEBI" id="CHEBI:29101"/>
        <dbReference type="ChEBI" id="CHEBI:57912"/>
    </reaction>
</comment>
<comment type="catalytic activity">
    <reaction evidence="1">
        <text>L-tyrosine(in) + Na(+)(in) = L-tyrosine(out) + Na(+)(out)</text>
        <dbReference type="Rhea" id="RHEA:68248"/>
        <dbReference type="ChEBI" id="CHEBI:29101"/>
        <dbReference type="ChEBI" id="CHEBI:58315"/>
    </reaction>
</comment>
<comment type="catalytic activity">
    <reaction evidence="1">
        <text>L-valine(in) + Na(+)(in) = L-valine(out) + Na(+)(out)</text>
        <dbReference type="Rhea" id="RHEA:29267"/>
        <dbReference type="ChEBI" id="CHEBI:29101"/>
        <dbReference type="ChEBI" id="CHEBI:57762"/>
    </reaction>
</comment>
<comment type="subunit">
    <text evidence="2">Interacts in a tissue-specific manner with ACE2 in small intestine and with CLTRN in the kidney. Interacts with CLTRN; this interaction is required for trafficking of SLC6A19 to the plasma membrane and for its catalytic activation in kidneys. Interacts with ACE2; this interaction is required for trafficking of SLC6A19 to the plasma membrane and for its catalytic activation in intestine. Interacts with ANPEP; the interaction positively regulates its amino acid transporter activity (By similarity).</text>
</comment>
<comment type="subcellular location">
    <subcellularLocation>
        <location evidence="1">Membrane</location>
        <topology evidence="3">Multi-pass membrane protein</topology>
    </subcellularLocation>
</comment>
<comment type="induction">
    <text evidence="4">By high salt intake in SHR rats. Reduced level upon high salt intake in Wistar Kyoto rats.</text>
</comment>
<comment type="similarity">
    <text evidence="5">Belongs to the sodium:neurotransmitter symporter (SNF) (TC 2.A.22) family. SLC6A19 subfamily.</text>
</comment>
<name>S6A19_RAT</name>
<gene>
    <name evidence="7" type="primary">Slc6a19</name>
    <name evidence="6" type="synonym">B0at1</name>
</gene>
<evidence type="ECO:0000250" key="1">
    <source>
        <dbReference type="UniProtKB" id="Q695T7"/>
    </source>
</evidence>
<evidence type="ECO:0000250" key="2">
    <source>
        <dbReference type="UniProtKB" id="Q9D687"/>
    </source>
</evidence>
<evidence type="ECO:0000255" key="3"/>
<evidence type="ECO:0000269" key="4">
    <source>
    </source>
</evidence>
<evidence type="ECO:0000305" key="5"/>
<evidence type="ECO:0000312" key="6">
    <source>
        <dbReference type="EMBL" id="CAI64591.1"/>
    </source>
</evidence>
<evidence type="ECO:0000312" key="7">
    <source>
        <dbReference type="RGD" id="1594328"/>
    </source>
</evidence>
<evidence type="ECO:0007744" key="8">
    <source>
    </source>
</evidence>
<feature type="chain" id="PRO_0000299498" description="Sodium-dependent neutral amino acid transporter B(0)AT1">
    <location>
        <begin position="1"/>
        <end position="634"/>
    </location>
</feature>
<feature type="topological domain" description="Cytoplasmic" evidence="3">
    <location>
        <begin position="1"/>
        <end position="41"/>
    </location>
</feature>
<feature type="transmembrane region" description="Helical" evidence="3">
    <location>
        <begin position="42"/>
        <end position="62"/>
    </location>
</feature>
<feature type="topological domain" description="Extracellular" evidence="3">
    <location>
        <begin position="63"/>
        <end position="65"/>
    </location>
</feature>
<feature type="transmembrane region" description="Helical" evidence="3">
    <location>
        <begin position="66"/>
        <end position="86"/>
    </location>
</feature>
<feature type="topological domain" description="Cytoplasmic" evidence="3">
    <location>
        <begin position="87"/>
        <end position="119"/>
    </location>
</feature>
<feature type="transmembrane region" description="Helical" evidence="3">
    <location>
        <begin position="120"/>
        <end position="140"/>
    </location>
</feature>
<feature type="topological domain" description="Extracellular" evidence="3">
    <location>
        <begin position="141"/>
        <end position="192"/>
    </location>
</feature>
<feature type="transmembrane region" description="Helical" evidence="3">
    <location>
        <begin position="193"/>
        <end position="213"/>
    </location>
</feature>
<feature type="topological domain" description="Cytoplasmic" evidence="3">
    <location>
        <begin position="214"/>
        <end position="221"/>
    </location>
</feature>
<feature type="transmembrane region" description="Helical" evidence="3">
    <location>
        <begin position="222"/>
        <end position="242"/>
    </location>
</feature>
<feature type="topological domain" description="Extracellular" evidence="3">
    <location>
        <begin position="243"/>
        <end position="268"/>
    </location>
</feature>
<feature type="transmembrane region" description="Helical" evidence="3">
    <location>
        <begin position="269"/>
        <end position="289"/>
    </location>
</feature>
<feature type="topological domain" description="Cytoplasmic" evidence="3">
    <location>
        <begin position="290"/>
        <end position="304"/>
    </location>
</feature>
<feature type="transmembrane region" description="Helical" evidence="3">
    <location>
        <begin position="305"/>
        <end position="325"/>
    </location>
</feature>
<feature type="topological domain" description="Extracellular" evidence="3">
    <location>
        <begin position="326"/>
        <end position="413"/>
    </location>
</feature>
<feature type="transmembrane region" description="Helical" evidence="3">
    <location>
        <begin position="414"/>
        <end position="434"/>
    </location>
</feature>
<feature type="topological domain" description="Cytoplasmic" evidence="3">
    <location>
        <begin position="435"/>
        <end position="456"/>
    </location>
</feature>
<feature type="transmembrane region" description="Helical" evidence="3">
    <location>
        <begin position="457"/>
        <end position="477"/>
    </location>
</feature>
<feature type="topological domain" description="Extracellular" evidence="3">
    <location>
        <begin position="478"/>
        <end position="490"/>
    </location>
</feature>
<feature type="transmembrane region" description="Helical" evidence="3">
    <location>
        <begin position="491"/>
        <end position="511"/>
    </location>
</feature>
<feature type="topological domain" description="Cytoplasmic" evidence="3">
    <location>
        <begin position="512"/>
        <end position="531"/>
    </location>
</feature>
<feature type="transmembrane region" description="Helical" evidence="3">
    <location>
        <begin position="532"/>
        <end position="552"/>
    </location>
</feature>
<feature type="topological domain" description="Extracellular" evidence="3">
    <location>
        <begin position="553"/>
        <end position="581"/>
    </location>
</feature>
<feature type="transmembrane region" description="Helical" evidence="3">
    <location>
        <begin position="582"/>
        <end position="602"/>
    </location>
</feature>
<feature type="topological domain" description="Cytoplasmic" evidence="3">
    <location>
        <begin position="603"/>
        <end position="634"/>
    </location>
</feature>
<feature type="modified residue" description="Phosphoserine" evidence="8">
    <location>
        <position position="17"/>
    </location>
</feature>
<feature type="modified residue" description="Phosphoserine" evidence="2">
    <location>
        <position position="627"/>
    </location>
</feature>
<feature type="glycosylation site" description="N-linked (GlcNAc...) asparagine" evidence="3">
    <location>
        <position position="158"/>
    </location>
</feature>
<feature type="glycosylation site" description="N-linked (GlcNAc...) asparagine" evidence="3">
    <location>
        <position position="182"/>
    </location>
</feature>
<feature type="glycosylation site" description="N-linked (GlcNAc...) asparagine" evidence="3">
    <location>
        <position position="258"/>
    </location>
</feature>
<feature type="glycosylation site" description="N-linked (GlcNAc...) asparagine" evidence="3">
    <location>
        <position position="354"/>
    </location>
</feature>
<feature type="glycosylation site" description="N-linked (GlcNAc...) asparagine" evidence="3">
    <location>
        <position position="368"/>
    </location>
</feature>
<feature type="sequence conflict" description="In Ref. 1; CAI64591." evidence="5" ref="1">
    <original>R</original>
    <variation>K</variation>
    <location>
        <position position="32"/>
    </location>
</feature>
<feature type="sequence conflict" description="In Ref. 1; CAI64591." evidence="5" ref="1">
    <original>S</original>
    <variation>P</variation>
    <location>
        <position position="186"/>
    </location>
</feature>
<feature type="sequence conflict" description="In Ref. 1; CAI64591." evidence="5" ref="1">
    <original>F</original>
    <variation>Y</variation>
    <location>
        <position position="276"/>
    </location>
</feature>
<feature type="sequence conflict" description="In Ref. 2; ABP63542." evidence="5" ref="2">
    <original>F</original>
    <variation>L</variation>
    <location>
        <position position="433"/>
    </location>
</feature>
<feature type="sequence conflict" description="In Ref. 2; ABP63542." evidence="5" ref="2">
    <original>L</original>
    <variation>F</variation>
    <location>
        <position position="458"/>
    </location>
</feature>